<evidence type="ECO:0000255" key="1">
    <source>
        <dbReference type="HAMAP-Rule" id="MF_01281"/>
    </source>
</evidence>
<evidence type="ECO:0000305" key="2"/>
<comment type="function">
    <text evidence="1">Catalyzes the deamination of three SAM-derived enzymatic products, namely 5'-deoxyadenosine, S-adenosyl-L-homocysteine, and 5'-methylthioadenosine, to produce the inosine analogs. Can also deaminate adenosine. The preferred substrate for this enzyme is 5'-deoxyadenosine, but all these substrates are efficiently deaminated. Likely functions in a S-adenosyl-L-methionine (SAM) recycling pathway from S-adenosyl-L-homocysteine (SAH) produced from SAM-dependent methylation reactions. May also be involved in the recycling of 5'-deoxyadenosine, whereupon the 5'-deoxyribose moiety of 5'-deoxyinosine is further metabolized to deoxyhexoses used for the biosynthesis of aromatic amino acids in methanogens.</text>
</comment>
<comment type="catalytic activity">
    <reaction evidence="1">
        <text>5'-deoxyadenosine + H2O + H(+) = 5'-deoxyinosine + NH4(+)</text>
        <dbReference type="Rhea" id="RHEA:42892"/>
        <dbReference type="ChEBI" id="CHEBI:15377"/>
        <dbReference type="ChEBI" id="CHEBI:15378"/>
        <dbReference type="ChEBI" id="CHEBI:17319"/>
        <dbReference type="ChEBI" id="CHEBI:28938"/>
        <dbReference type="ChEBI" id="CHEBI:82775"/>
        <dbReference type="EC" id="3.5.4.41"/>
    </reaction>
    <physiologicalReaction direction="left-to-right" evidence="1">
        <dbReference type="Rhea" id="RHEA:42893"/>
    </physiologicalReaction>
</comment>
<comment type="catalytic activity">
    <reaction evidence="1">
        <text>S-adenosyl-L-homocysteine + H2O + H(+) = S-inosyl-L-homocysteine + NH4(+)</text>
        <dbReference type="Rhea" id="RHEA:20716"/>
        <dbReference type="ChEBI" id="CHEBI:15377"/>
        <dbReference type="ChEBI" id="CHEBI:15378"/>
        <dbReference type="ChEBI" id="CHEBI:28938"/>
        <dbReference type="ChEBI" id="CHEBI:57856"/>
        <dbReference type="ChEBI" id="CHEBI:57985"/>
        <dbReference type="EC" id="3.5.4.28"/>
    </reaction>
    <physiologicalReaction direction="left-to-right" evidence="1">
        <dbReference type="Rhea" id="RHEA:20717"/>
    </physiologicalReaction>
</comment>
<comment type="catalytic activity">
    <reaction evidence="1">
        <text>S-methyl-5'-thioadenosine + H2O + H(+) = S-methyl-5'-thioinosine + NH4(+)</text>
        <dbReference type="Rhea" id="RHEA:25025"/>
        <dbReference type="ChEBI" id="CHEBI:15377"/>
        <dbReference type="ChEBI" id="CHEBI:15378"/>
        <dbReference type="ChEBI" id="CHEBI:17509"/>
        <dbReference type="ChEBI" id="CHEBI:28938"/>
        <dbReference type="ChEBI" id="CHEBI:48595"/>
        <dbReference type="EC" id="3.5.4.31"/>
    </reaction>
    <physiologicalReaction direction="left-to-right" evidence="1">
        <dbReference type="Rhea" id="RHEA:25026"/>
    </physiologicalReaction>
</comment>
<comment type="catalytic activity">
    <reaction evidence="1">
        <text>adenosine + H2O + H(+) = inosine + NH4(+)</text>
        <dbReference type="Rhea" id="RHEA:24408"/>
        <dbReference type="ChEBI" id="CHEBI:15377"/>
        <dbReference type="ChEBI" id="CHEBI:15378"/>
        <dbReference type="ChEBI" id="CHEBI:16335"/>
        <dbReference type="ChEBI" id="CHEBI:17596"/>
        <dbReference type="ChEBI" id="CHEBI:28938"/>
        <dbReference type="EC" id="3.5.4.4"/>
    </reaction>
    <physiologicalReaction direction="left-to-right" evidence="1">
        <dbReference type="Rhea" id="RHEA:24409"/>
    </physiologicalReaction>
</comment>
<comment type="cofactor">
    <cofactor evidence="1">
        <name>Zn(2+)</name>
        <dbReference type="ChEBI" id="CHEBI:29105"/>
    </cofactor>
    <text evidence="1">Binds 1 zinc ion per subunit.</text>
</comment>
<comment type="pathway">
    <text evidence="1">Amino-acid biosynthesis; S-adenosyl-L-methionine biosynthesis.</text>
</comment>
<comment type="subunit">
    <text evidence="1">Homotetramer.</text>
</comment>
<comment type="miscellaneous">
    <text evidence="1">SAH is a product of SAM methyltransferases and is known to be a feedback inhibitor of these enzymes. As a result of this inhibition, organisms have evolved efficient enzymes to metabolize SAH via different pathways. The pathway found in methanogens differs from the canonical pathway, it uses the deamination of S-adenosyl-L-homocysteine to form S-inosyl-L-homocysteine for the regeneration of SAM from S-adenosyl-L-homocysteine. 5'-deoxyadenosine is a radical SAM enzyme reaction product which strongly inhibits radical SAM enzymes. A pathway for removing this product must be present in methanogens where the MTA/SAH nucleosidase which normally metabolizes this compound is absent.</text>
</comment>
<comment type="similarity">
    <text evidence="1">Belongs to the metallo-dependent hydrolases superfamily. MTA/SAH deaminase family.</text>
</comment>
<comment type="sequence caution" evidence="2">
    <conflict type="erroneous initiation">
        <sequence resource="EMBL-CDS" id="AAM31975"/>
    </conflict>
</comment>
<gene>
    <name evidence="1" type="primary">dadD</name>
    <name type="ordered locus">MM_2279</name>
</gene>
<protein>
    <recommendedName>
        <fullName evidence="1">5'-deoxyadenosine deaminase</fullName>
        <shortName evidence="1">5'-dA deaminase</shortName>
        <ecNumber evidence="1">3.5.4.41</ecNumber>
    </recommendedName>
    <alternativeName>
        <fullName evidence="1">5'-methylthioadenosine deaminase</fullName>
        <shortName evidence="1">MTA deaminase</shortName>
        <ecNumber evidence="1">3.5.4.31</ecNumber>
    </alternativeName>
    <alternativeName>
        <fullName evidence="1">Adenosine deaminase</fullName>
        <ecNumber evidence="1">3.5.4.4</ecNumber>
    </alternativeName>
    <alternativeName>
        <fullName evidence="1">S-adenosylhomocysteine deaminase</fullName>
        <shortName evidence="1">SAH deaminase</shortName>
        <ecNumber evidence="1">3.5.4.28</ecNumber>
    </alternativeName>
</protein>
<organism>
    <name type="scientific">Methanosarcina mazei (strain ATCC BAA-159 / DSM 3647 / Goe1 / Go1 / JCM 11833 / OCM 88)</name>
    <name type="common">Methanosarcina frisia</name>
    <dbReference type="NCBI Taxonomy" id="192952"/>
    <lineage>
        <taxon>Archaea</taxon>
        <taxon>Methanobacteriati</taxon>
        <taxon>Methanobacteriota</taxon>
        <taxon>Stenosarchaea group</taxon>
        <taxon>Methanomicrobia</taxon>
        <taxon>Methanosarcinales</taxon>
        <taxon>Methanosarcinaceae</taxon>
        <taxon>Methanosarcina</taxon>
    </lineage>
</organism>
<name>DADD_METMA</name>
<dbReference type="EC" id="3.5.4.41" evidence="1"/>
<dbReference type="EC" id="3.5.4.31" evidence="1"/>
<dbReference type="EC" id="3.5.4.4" evidence="1"/>
<dbReference type="EC" id="3.5.4.28" evidence="1"/>
<dbReference type="EMBL" id="AE008384">
    <property type="protein sequence ID" value="AAM31975.1"/>
    <property type="status" value="ALT_INIT"/>
    <property type="molecule type" value="Genomic_DNA"/>
</dbReference>
<dbReference type="RefSeq" id="WP_048037226.1">
    <property type="nucleotide sequence ID" value="NC_003901.1"/>
</dbReference>
<dbReference type="SMR" id="Q8PUQ3"/>
<dbReference type="KEGG" id="mma:MM_2279"/>
<dbReference type="PATRIC" id="fig|192952.21.peg.2612"/>
<dbReference type="eggNOG" id="arCOG00695">
    <property type="taxonomic scope" value="Archaea"/>
</dbReference>
<dbReference type="HOGENOM" id="CLU_012358_2_1_2"/>
<dbReference type="UniPathway" id="UPA00315"/>
<dbReference type="Proteomes" id="UP000000595">
    <property type="component" value="Chromosome"/>
</dbReference>
<dbReference type="GO" id="GO:0090613">
    <property type="term" value="F:5'-deoxyadenosine deaminase activity"/>
    <property type="evidence" value="ECO:0007669"/>
    <property type="project" value="UniProtKB-UniRule"/>
</dbReference>
<dbReference type="GO" id="GO:0090614">
    <property type="term" value="F:5'-methylthioadenosine deaminase activity"/>
    <property type="evidence" value="ECO:0007669"/>
    <property type="project" value="UniProtKB-EC"/>
</dbReference>
<dbReference type="GO" id="GO:0004000">
    <property type="term" value="F:adenosine deaminase activity"/>
    <property type="evidence" value="ECO:0007669"/>
    <property type="project" value="UniProtKB-UniRule"/>
</dbReference>
<dbReference type="GO" id="GO:0046872">
    <property type="term" value="F:metal ion binding"/>
    <property type="evidence" value="ECO:0007669"/>
    <property type="project" value="UniProtKB-KW"/>
</dbReference>
<dbReference type="GO" id="GO:0050270">
    <property type="term" value="F:S-adenosylhomocysteine deaminase activity"/>
    <property type="evidence" value="ECO:0000314"/>
    <property type="project" value="CACAO"/>
</dbReference>
<dbReference type="GO" id="GO:0006556">
    <property type="term" value="P:S-adenosylmethionine biosynthetic process"/>
    <property type="evidence" value="ECO:0007669"/>
    <property type="project" value="UniProtKB-UniRule"/>
</dbReference>
<dbReference type="CDD" id="cd01298">
    <property type="entry name" value="ATZ_TRZ_like"/>
    <property type="match status" value="1"/>
</dbReference>
<dbReference type="FunFam" id="3.20.20.140:FF:000014">
    <property type="entry name" value="5-methylthioadenosine/S-adenosylhomocysteine deaminase"/>
    <property type="match status" value="1"/>
</dbReference>
<dbReference type="Gene3D" id="3.20.20.140">
    <property type="entry name" value="Metal-dependent hydrolases"/>
    <property type="match status" value="1"/>
</dbReference>
<dbReference type="Gene3D" id="2.30.40.10">
    <property type="entry name" value="Urease, subunit C, domain 1"/>
    <property type="match status" value="1"/>
</dbReference>
<dbReference type="HAMAP" id="MF_01281">
    <property type="entry name" value="MTA_SAH_deamin"/>
    <property type="match status" value="1"/>
</dbReference>
<dbReference type="InterPro" id="IPR006680">
    <property type="entry name" value="Amidohydro-rel"/>
</dbReference>
<dbReference type="InterPro" id="IPR023512">
    <property type="entry name" value="Deaminase_MtaD/DadD"/>
</dbReference>
<dbReference type="InterPro" id="IPR011059">
    <property type="entry name" value="Metal-dep_hydrolase_composite"/>
</dbReference>
<dbReference type="InterPro" id="IPR032466">
    <property type="entry name" value="Metal_Hydrolase"/>
</dbReference>
<dbReference type="InterPro" id="IPR050287">
    <property type="entry name" value="MTA/SAH_deaminase"/>
</dbReference>
<dbReference type="NCBIfam" id="NF004701">
    <property type="entry name" value="PRK06038.1"/>
    <property type="match status" value="1"/>
</dbReference>
<dbReference type="PANTHER" id="PTHR43794:SF11">
    <property type="entry name" value="AMIDOHYDROLASE-RELATED DOMAIN-CONTAINING PROTEIN"/>
    <property type="match status" value="1"/>
</dbReference>
<dbReference type="PANTHER" id="PTHR43794">
    <property type="entry name" value="AMINOHYDROLASE SSNA-RELATED"/>
    <property type="match status" value="1"/>
</dbReference>
<dbReference type="Pfam" id="PF01979">
    <property type="entry name" value="Amidohydro_1"/>
    <property type="match status" value="1"/>
</dbReference>
<dbReference type="SUPFAM" id="SSF51338">
    <property type="entry name" value="Composite domain of metallo-dependent hydrolases"/>
    <property type="match status" value="1"/>
</dbReference>
<dbReference type="SUPFAM" id="SSF51556">
    <property type="entry name" value="Metallo-dependent hydrolases"/>
    <property type="match status" value="1"/>
</dbReference>
<feature type="chain" id="PRO_0000312481" description="5'-deoxyadenosine deaminase">
    <location>
        <begin position="1"/>
        <end position="432"/>
    </location>
</feature>
<feature type="binding site" evidence="1">
    <location>
        <position position="63"/>
    </location>
    <ligand>
        <name>Zn(2+)</name>
        <dbReference type="ChEBI" id="CHEBI:29105"/>
    </ligand>
</feature>
<feature type="binding site" evidence="1">
    <location>
        <position position="65"/>
    </location>
    <ligand>
        <name>Zn(2+)</name>
        <dbReference type="ChEBI" id="CHEBI:29105"/>
    </ligand>
</feature>
<feature type="binding site" evidence="1">
    <location>
        <position position="92"/>
    </location>
    <ligand>
        <name>substrate</name>
    </ligand>
</feature>
<feature type="binding site" evidence="1">
    <location>
        <position position="184"/>
    </location>
    <ligand>
        <name>substrate</name>
    </ligand>
</feature>
<feature type="binding site" evidence="1">
    <location>
        <position position="211"/>
    </location>
    <ligand>
        <name>Zn(2+)</name>
        <dbReference type="ChEBI" id="CHEBI:29105"/>
    </ligand>
</feature>
<feature type="binding site" evidence="1">
    <location>
        <position position="214"/>
    </location>
    <ligand>
        <name>substrate</name>
    </ligand>
</feature>
<feature type="binding site" evidence="1">
    <location>
        <position position="299"/>
    </location>
    <ligand>
        <name>substrate</name>
    </ligand>
</feature>
<feature type="binding site" evidence="1">
    <location>
        <position position="299"/>
    </location>
    <ligand>
        <name>Zn(2+)</name>
        <dbReference type="ChEBI" id="CHEBI:29105"/>
    </ligand>
</feature>
<proteinExistence type="inferred from homology"/>
<keyword id="KW-0378">Hydrolase</keyword>
<keyword id="KW-0479">Metal-binding</keyword>
<keyword id="KW-0862">Zinc</keyword>
<sequence>MADIIIKNAYVLTMDPDAGDIKKGTVVIEDGKITEIGVKTKESADTVIDAKGSVVMPGLVNTHTHAAMTLFRGYADDLQLAEWLEKHIWPAEAQLTAEDVYRGSLLACLEMIRSGTTSFADMYFFMDETAKAVEASGLRASLSHGLIELWNEEKGENDLKEGKRFVRAWQGAAKGRIKTMYGPHAPNTCSDEFLAKVKEAARQDGAGLHIHVLETEAELLAMKERYGKCSVHMLDDIGFFGPDVLAAHCVWLSDGDIEVLREKGVNVSHNPISNMKLASGTAPVYKMLERGVNVSLGTDGCASNNNLDLFEEMKTAALLHKLSTCNPTALPARQVLQMATVNGAKALGTETGMLKTGMKADMIIVDMKKPHLTPCFDVPSHLVYSAGGSDVRTTIVDGKILMQDYRVMVLDEQKVIEEAQKAAEELVARVNS</sequence>
<accession>Q8PUQ3</accession>
<reference key="1">
    <citation type="journal article" date="2002" name="J. Mol. Microbiol. Biotechnol.">
        <title>The genome of Methanosarcina mazei: evidence for lateral gene transfer between Bacteria and Archaea.</title>
        <authorList>
            <person name="Deppenmeier U."/>
            <person name="Johann A."/>
            <person name="Hartsch T."/>
            <person name="Merkl R."/>
            <person name="Schmitz R.A."/>
            <person name="Martinez-Arias R."/>
            <person name="Henne A."/>
            <person name="Wiezer A."/>
            <person name="Baeumer S."/>
            <person name="Jacobi C."/>
            <person name="Brueggemann H."/>
            <person name="Lienard T."/>
            <person name="Christmann A."/>
            <person name="Boemecke M."/>
            <person name="Steckel S."/>
            <person name="Bhattacharyya A."/>
            <person name="Lykidis A."/>
            <person name="Overbeek R."/>
            <person name="Klenk H.-P."/>
            <person name="Gunsalus R.P."/>
            <person name="Fritz H.-J."/>
            <person name="Gottschalk G."/>
        </authorList>
    </citation>
    <scope>NUCLEOTIDE SEQUENCE [LARGE SCALE GENOMIC DNA]</scope>
    <source>
        <strain>ATCC BAA-159 / DSM 3647 / Goe1 / Go1 / JCM 11833 / OCM 88</strain>
    </source>
</reference>